<reference key="1">
    <citation type="journal article" date="2012" name="BMC Genomics">
        <title>The venom-gland transcriptome of the eastern diamondback rattlesnake (Crotalus adamanteus).</title>
        <authorList>
            <person name="Rokyta D.R."/>
            <person name="Lemmon A.R."/>
            <person name="Margres M.J."/>
            <person name="Aronow K."/>
        </authorList>
    </citation>
    <scope>NUCLEOTIDE SEQUENCE [MRNA]</scope>
    <source>
        <tissue>Venom gland</tissue>
    </source>
</reference>
<sequence length="1652" mass="184923">MEGMALYLVAALLIGFPASSFGALYTFITPGVLRTDTEEKILVEAHGDNAPKQLDISVHDFPRKQKILYQTRVDMNPAGGMLVTPTITIPAKDLNKDSRQNQYVVVQVTAPGLRLEKVVLLSYQSGFVFIQTDKGIYTPGSPVRYRVFSMDHNMHRMDKTVIVEFQTPQGIVVSSNPVNPASSLIRPYNLPELVSFGTWKAVAKYENSPEESYTALFDVREYVLPGFEVRVQPSEKFLYIDGNTDFHVSITARYLYGKRVEGVAFVLFGVKIDGNKKSIPESLTRIPIIDGDGEATLERHTLSRRFQRLNDLVGHNLYVSVTVITDSGSDMVVTEQSGIHIVTSPYQISFTKTPKYFKPGMPYELMVYVTNPDGSPAANVPVVSESIHSKGTTLSDGTAKLILNTPLNIQSLSITVKTNHRDLPRERQAMKSMTATAYQTQGGSGNYLHIAITSTEIKPGDNLPVSFNVRGNANSLNQIQYFTYLILTKGKIFKVGRQPRGAGQNLVTMTLPITPDLIPSFRFLAYYQVGNSEIVADSVWVDVKDTCMGTLVVKGASSRDNRIQKPGAAMKIKLEGDPGARVGLVAVDKAVYVLSDEYKISQTKIWDTIEKSDFGCTAGSGQNNLGVFEDAGLALATSTSLNTKQRSDAKCPQPENRRRRRSVVLLDSKASKAAQFPDQALRKCCEDGMHENPMGYSCEKREKYIQEGDACKAAFLECCRYIKGIHDENKREDELFLARSDFEDEFFGEDNIISRSDFPESWLWLTENLNAVPNNEGISSKTVPFYLRDSITTWEVLAVSITPTKGICVAEPYEITVMKDFFIDLRLPYSVVKNEQVEVRAILYNYVDDDIDVRVELLHNPAFCSVATETQRYRTQVTIKALSSWAVPFVIVPLQQGLHDIEVRASVRGQLASDGVKKKLKVVPEGMRKDIVTVIELDPSTKGVGGTQEQLVKANELDGKVPDTEIETKISVQGDRVAQIVENSIDGNKLSHLIITPSGCGEQNMITMTPSVIATYYLDTTGQWETLGVDRRTEAVQQIKKGYAQQLVYKKADHSYAAFVNRDSSSWLTAYVVKVFAMATKVVPDISHEIICGGVKWLILNRQQPDGVFKENAPVIHGEMLGGTKGAEPEVSLTAFILIALLESRSICNEHINILESSINKAADYLLKKYEKLQRPYTTALTAYALAAAGLLNDDRVLMAASTERNRWEEHNAYTYNIEGTSYALLALLKMEKFAEANPVVRWLTDQKYYGGTYGQTQATVVGFQGLAEYEIAMPSHKDLNLDIVIKLPEREVPISYRIDATNALRAQTTETKLNEDFTVSASGDGKATMTILTVYNAQLREDANVCNQFHLEVSVERIDSNLKQAKGAKETLKLKICTRYLGEVDSTMTIIDVSMLTGFLPDAEDLTRLSKGVDRYISKFEIDNNMAQKGAVIIYLDKVSHSEDECLQFRIQKHFEVGFIQPGSVKVYSYYNLDEQCTRFYHPDKGTGLLNKICHGNVCRCAEETCSLLNQQKKIDLQLRIQKACEPNVDYVYKAKLLRIEEKDASDIYVMDVLEVIKGGTDRNPQAKPRQYVSQRKCQEALNLKVNNDYLIWGLSSDLWHKKDEISYLITRNTWIERWPNEDECQDEEFQNLCNDFTQLSNTLTIFGCPN</sequence>
<keyword id="KW-0165">Cleavage on pair of basic residues</keyword>
<keyword id="KW-1216">Complement system impairing toxin</keyword>
<keyword id="KW-1015">Disulfide bond</keyword>
<keyword id="KW-0460">Magnesium</keyword>
<keyword id="KW-0479">Metal-binding</keyword>
<keyword id="KW-0964">Secreted</keyword>
<keyword id="KW-0732">Signal</keyword>
<keyword id="KW-0882">Thioester bond</keyword>
<keyword id="KW-0800">Toxin</keyword>
<accession>J3S836</accession>
<feature type="signal peptide" evidence="1">
    <location>
        <begin position="1"/>
        <end position="22"/>
    </location>
</feature>
<feature type="chain" id="PRO_0000423448" description="Venom factor">
    <location>
        <begin position="23"/>
        <end position="1652"/>
    </location>
</feature>
<feature type="chain" id="PRO_0000423449" description="VF alpha chain">
    <location>
        <begin position="23"/>
        <end position="656"/>
    </location>
</feature>
<feature type="propeptide" id="PRO_0000423450" evidence="1">
    <location>
        <begin position="657"/>
        <end position="740"/>
    </location>
</feature>
<feature type="chain" id="PRO_0000423451" description="VF gamma chain">
    <location>
        <begin position="741"/>
        <end position="991"/>
    </location>
</feature>
<feature type="propeptide" id="PRO_0000423452" evidence="1">
    <location>
        <begin position="992"/>
        <end position="1270"/>
    </location>
</feature>
<feature type="chain" id="PRO_0000423453" description="VF beta chain">
    <location>
        <begin position="1271"/>
        <end position="1652"/>
    </location>
</feature>
<feature type="domain" description="Anaphylatoxin-like" evidence="2">
    <location>
        <begin position="684"/>
        <end position="719"/>
    </location>
</feature>
<feature type="domain" description="NTR" evidence="3">
    <location>
        <begin position="1507"/>
        <end position="1650"/>
    </location>
</feature>
<feature type="region of interest" description="C3a-like domain" evidence="1">
    <location>
        <begin position="661"/>
        <end position="739"/>
    </location>
</feature>
<feature type="region of interest" description="Factor B binding site" evidence="1">
    <location>
        <begin position="743"/>
        <end position="754"/>
    </location>
</feature>
<feature type="region of interest" description="C3d-like domain" evidence="1">
    <location>
        <begin position="992"/>
        <end position="1270"/>
    </location>
</feature>
<feature type="region of interest" description="Factor H binding site" evidence="1">
    <location>
        <begin position="1197"/>
        <end position="1260"/>
    </location>
</feature>
<feature type="binding site" evidence="1">
    <location>
        <position position="519"/>
    </location>
    <ligand>
        <name>Mg(2+)</name>
        <dbReference type="ChEBI" id="CHEBI:18420"/>
    </ligand>
</feature>
<feature type="binding site" evidence="1">
    <location>
        <position position="542"/>
    </location>
    <ligand>
        <name>Mg(2+)</name>
        <dbReference type="ChEBI" id="CHEBI:18420"/>
    </ligand>
</feature>
<feature type="binding site" evidence="1">
    <location>
        <position position="543"/>
    </location>
    <ligand>
        <name>Mg(2+)</name>
        <dbReference type="ChEBI" id="CHEBI:18420"/>
    </ligand>
</feature>
<feature type="binding site" evidence="1">
    <location>
        <position position="545"/>
    </location>
    <ligand>
        <name>Mg(2+)</name>
        <dbReference type="ChEBI" id="CHEBI:18420"/>
    </ligand>
</feature>
<feature type="disulfide bond" description="Interchain (between alpha and gamma chains)" evidence="2 3">
    <location>
        <begin position="547"/>
        <end position="808"/>
    </location>
</feature>
<feature type="disulfide bond" evidence="1">
    <location>
        <begin position="616"/>
        <end position="651"/>
    </location>
</feature>
<feature type="disulfide bond" evidence="1">
    <location>
        <begin position="684"/>
        <end position="711"/>
    </location>
</feature>
<feature type="disulfide bond" evidence="1">
    <location>
        <begin position="685"/>
        <end position="718"/>
    </location>
</feature>
<feature type="disulfide bond" evidence="1">
    <location>
        <begin position="698"/>
        <end position="719"/>
    </location>
</feature>
<feature type="disulfide bond" description="Interchain (between gamma and beta chains)" evidence="2 3">
    <location>
        <begin position="864"/>
        <end position="1502"/>
    </location>
</feature>
<feature type="disulfide bond" evidence="1">
    <location>
        <begin position="1347"/>
        <end position="1478"/>
    </location>
</feature>
<feature type="disulfide bond" evidence="1">
    <location>
        <begin position="1378"/>
        <end position="1447"/>
    </location>
</feature>
<feature type="disulfide bond" evidence="1">
    <location>
        <begin position="1495"/>
        <end position="1500"/>
    </location>
</feature>
<feature type="disulfide bond" evidence="1">
    <location>
        <begin position="1507"/>
        <end position="1579"/>
    </location>
</feature>
<feature type="disulfide bond" evidence="1">
    <location>
        <begin position="1526"/>
        <end position="1650"/>
    </location>
</feature>
<feature type="disulfide bond" evidence="1">
    <location>
        <begin position="1626"/>
        <end position="1635"/>
    </location>
</feature>
<feature type="cross-link" description="Isoglutamyl cysteine thioester (Cys-Gln)" evidence="1">
    <location>
        <begin position="1000"/>
        <end position="1003"/>
    </location>
</feature>
<name>VCO3_CROAD</name>
<organism>
    <name type="scientific">Crotalus adamanteus</name>
    <name type="common">Eastern diamondback rattlesnake</name>
    <dbReference type="NCBI Taxonomy" id="8729"/>
    <lineage>
        <taxon>Eukaryota</taxon>
        <taxon>Metazoa</taxon>
        <taxon>Chordata</taxon>
        <taxon>Craniata</taxon>
        <taxon>Vertebrata</taxon>
        <taxon>Euteleostomi</taxon>
        <taxon>Lepidosauria</taxon>
        <taxon>Squamata</taxon>
        <taxon>Bifurcata</taxon>
        <taxon>Unidentata</taxon>
        <taxon>Episquamata</taxon>
        <taxon>Toxicofera</taxon>
        <taxon>Serpentes</taxon>
        <taxon>Colubroidea</taxon>
        <taxon>Viperidae</taxon>
        <taxon>Crotalinae</taxon>
        <taxon>Crotalus</taxon>
    </lineage>
</organism>
<evidence type="ECO:0000250" key="1"/>
<evidence type="ECO:0000255" key="2">
    <source>
        <dbReference type="PROSITE-ProRule" id="PRU00022"/>
    </source>
</evidence>
<evidence type="ECO:0000255" key="3">
    <source>
        <dbReference type="PROSITE-ProRule" id="PRU00295"/>
    </source>
</evidence>
<evidence type="ECO:0000305" key="4"/>
<dbReference type="EMBL" id="JU173742">
    <property type="protein sequence ID" value="AFJ49268.1"/>
    <property type="molecule type" value="mRNA"/>
</dbReference>
<dbReference type="SMR" id="J3S836"/>
<dbReference type="GO" id="GO:0005615">
    <property type="term" value="C:extracellular space"/>
    <property type="evidence" value="ECO:0007669"/>
    <property type="project" value="InterPro"/>
</dbReference>
<dbReference type="GO" id="GO:0004866">
    <property type="term" value="F:endopeptidase inhibitor activity"/>
    <property type="evidence" value="ECO:0007669"/>
    <property type="project" value="InterPro"/>
</dbReference>
<dbReference type="GO" id="GO:0046872">
    <property type="term" value="F:metal ion binding"/>
    <property type="evidence" value="ECO:0007669"/>
    <property type="project" value="UniProtKB-KW"/>
</dbReference>
<dbReference type="GO" id="GO:0090729">
    <property type="term" value="F:toxin activity"/>
    <property type="evidence" value="ECO:0007669"/>
    <property type="project" value="UniProtKB-KW"/>
</dbReference>
<dbReference type="GO" id="GO:0006956">
    <property type="term" value="P:complement activation"/>
    <property type="evidence" value="ECO:0007669"/>
    <property type="project" value="InterPro"/>
</dbReference>
<dbReference type="GO" id="GO:0006954">
    <property type="term" value="P:inflammatory response"/>
    <property type="evidence" value="ECO:0007669"/>
    <property type="project" value="InterPro"/>
</dbReference>
<dbReference type="CDD" id="cd00017">
    <property type="entry name" value="ANATO"/>
    <property type="match status" value="1"/>
</dbReference>
<dbReference type="CDD" id="cd02896">
    <property type="entry name" value="complement_C3_C4_C5"/>
    <property type="match status" value="1"/>
</dbReference>
<dbReference type="CDD" id="cd03583">
    <property type="entry name" value="NTR_complement_C3"/>
    <property type="match status" value="1"/>
</dbReference>
<dbReference type="FunFam" id="1.20.91.20:FF:000001">
    <property type="entry name" value="Complement C3"/>
    <property type="match status" value="1"/>
</dbReference>
<dbReference type="FunFam" id="2.20.130.20:FF:000001">
    <property type="entry name" value="Complement C3"/>
    <property type="match status" value="1"/>
</dbReference>
<dbReference type="FunFam" id="2.40.50.120:FF:000013">
    <property type="entry name" value="Complement C3"/>
    <property type="match status" value="1"/>
</dbReference>
<dbReference type="FunFam" id="2.60.40.10:FF:001013">
    <property type="entry name" value="Complement C3"/>
    <property type="match status" value="1"/>
</dbReference>
<dbReference type="FunFam" id="2.60.40.1930:FF:000008">
    <property type="entry name" value="Complement C3"/>
    <property type="match status" value="1"/>
</dbReference>
<dbReference type="FunFam" id="2.60.40.690:FF:000004">
    <property type="entry name" value="Complement C3"/>
    <property type="match status" value="1"/>
</dbReference>
<dbReference type="FunFam" id="2.60.40.10:FF:000155">
    <property type="entry name" value="complement C3 isoform X1"/>
    <property type="match status" value="1"/>
</dbReference>
<dbReference type="FunFam" id="2.60.40.1940:FF:000001">
    <property type="entry name" value="Complement component C3"/>
    <property type="match status" value="1"/>
</dbReference>
<dbReference type="Gene3D" id="1.50.10.20">
    <property type="match status" value="1"/>
</dbReference>
<dbReference type="Gene3D" id="2.20.130.20">
    <property type="match status" value="1"/>
</dbReference>
<dbReference type="Gene3D" id="2.40.50.120">
    <property type="match status" value="1"/>
</dbReference>
<dbReference type="Gene3D" id="2.60.120.1540">
    <property type="match status" value="1"/>
</dbReference>
<dbReference type="Gene3D" id="2.60.40.1930">
    <property type="match status" value="3"/>
</dbReference>
<dbReference type="Gene3D" id="2.60.40.1940">
    <property type="match status" value="1"/>
</dbReference>
<dbReference type="Gene3D" id="6.20.50.160">
    <property type="match status" value="1"/>
</dbReference>
<dbReference type="Gene3D" id="2.60.40.690">
    <property type="entry name" value="Alpha-macroglobulin, receptor-binding domain"/>
    <property type="match status" value="1"/>
</dbReference>
<dbReference type="Gene3D" id="1.20.91.20">
    <property type="entry name" value="Anaphylotoxins (complement system)"/>
    <property type="match status" value="1"/>
</dbReference>
<dbReference type="Gene3D" id="2.60.40.10">
    <property type="entry name" value="Immunoglobulins"/>
    <property type="match status" value="2"/>
</dbReference>
<dbReference type="InterPro" id="IPR009048">
    <property type="entry name" value="A-macroglobulin_rcpt-bd"/>
</dbReference>
<dbReference type="InterPro" id="IPR036595">
    <property type="entry name" value="A-macroglobulin_rcpt-bd_sf"/>
</dbReference>
<dbReference type="InterPro" id="IPR050473">
    <property type="entry name" value="A2M/Complement_sys"/>
</dbReference>
<dbReference type="InterPro" id="IPR011625">
    <property type="entry name" value="A2M_N_BRD"/>
</dbReference>
<dbReference type="InterPro" id="IPR047565">
    <property type="entry name" value="Alpha-macroglob_thiol-ester_cl"/>
</dbReference>
<dbReference type="InterPro" id="IPR011626">
    <property type="entry name" value="Alpha-macroglobulin_TED"/>
</dbReference>
<dbReference type="InterPro" id="IPR000020">
    <property type="entry name" value="Anaphylatoxin/fibulin"/>
</dbReference>
<dbReference type="InterPro" id="IPR018081">
    <property type="entry name" value="Anaphylatoxin_comp_syst"/>
</dbReference>
<dbReference type="InterPro" id="IPR001840">
    <property type="entry name" value="Anaphylatoxn_comp_syst_dom"/>
</dbReference>
<dbReference type="InterPro" id="IPR041425">
    <property type="entry name" value="C3/4/5_MG1"/>
</dbReference>
<dbReference type="InterPro" id="IPR049466">
    <property type="entry name" value="C3_CUB1"/>
</dbReference>
<dbReference type="InterPro" id="IPR048848">
    <property type="entry name" value="C3_CUB2"/>
</dbReference>
<dbReference type="InterPro" id="IPR013783">
    <property type="entry name" value="Ig-like_fold"/>
</dbReference>
<dbReference type="InterPro" id="IPR001599">
    <property type="entry name" value="Macroglobln_a2"/>
</dbReference>
<dbReference type="InterPro" id="IPR019742">
    <property type="entry name" value="MacrogloblnA2_CS"/>
</dbReference>
<dbReference type="InterPro" id="IPR002890">
    <property type="entry name" value="MG2"/>
</dbReference>
<dbReference type="InterPro" id="IPR041555">
    <property type="entry name" value="MG3"/>
</dbReference>
<dbReference type="InterPro" id="IPR040839">
    <property type="entry name" value="MG4"/>
</dbReference>
<dbReference type="InterPro" id="IPR001134">
    <property type="entry name" value="Netrin_domain"/>
</dbReference>
<dbReference type="InterPro" id="IPR018933">
    <property type="entry name" value="Netrin_module_non-TIMP"/>
</dbReference>
<dbReference type="InterPro" id="IPR035815">
    <property type="entry name" value="NTR_complement_C3"/>
</dbReference>
<dbReference type="InterPro" id="IPR008930">
    <property type="entry name" value="Terpenoid_cyclase/PrenylTrfase"/>
</dbReference>
<dbReference type="InterPro" id="IPR008993">
    <property type="entry name" value="TIMP-like_OB-fold"/>
</dbReference>
<dbReference type="PANTHER" id="PTHR11412:SF81">
    <property type="entry name" value="COMPLEMENT C3"/>
    <property type="match status" value="1"/>
</dbReference>
<dbReference type="PANTHER" id="PTHR11412">
    <property type="entry name" value="MACROGLOBULIN / COMPLEMENT"/>
    <property type="match status" value="1"/>
</dbReference>
<dbReference type="Pfam" id="PF00207">
    <property type="entry name" value="A2M"/>
    <property type="match status" value="1"/>
</dbReference>
<dbReference type="Pfam" id="PF07703">
    <property type="entry name" value="A2M_BRD"/>
    <property type="match status" value="1"/>
</dbReference>
<dbReference type="Pfam" id="PF07677">
    <property type="entry name" value="A2M_recep"/>
    <property type="match status" value="1"/>
</dbReference>
<dbReference type="Pfam" id="PF01821">
    <property type="entry name" value="ANATO"/>
    <property type="match status" value="1"/>
</dbReference>
<dbReference type="Pfam" id="PF21406">
    <property type="entry name" value="C3_CUB1"/>
    <property type="match status" value="1"/>
</dbReference>
<dbReference type="Pfam" id="PF21308">
    <property type="entry name" value="C3_CUB2"/>
    <property type="match status" value="1"/>
</dbReference>
<dbReference type="Pfam" id="PF17790">
    <property type="entry name" value="MG1"/>
    <property type="match status" value="1"/>
</dbReference>
<dbReference type="Pfam" id="PF01835">
    <property type="entry name" value="MG2"/>
    <property type="match status" value="1"/>
</dbReference>
<dbReference type="Pfam" id="PF17791">
    <property type="entry name" value="MG3"/>
    <property type="match status" value="1"/>
</dbReference>
<dbReference type="Pfam" id="PF17789">
    <property type="entry name" value="MG4"/>
    <property type="match status" value="1"/>
</dbReference>
<dbReference type="Pfam" id="PF01759">
    <property type="entry name" value="NTR"/>
    <property type="match status" value="1"/>
</dbReference>
<dbReference type="Pfam" id="PF07678">
    <property type="entry name" value="TED_complement"/>
    <property type="match status" value="1"/>
</dbReference>
<dbReference type="PRINTS" id="PR00004">
    <property type="entry name" value="ANAPHYLATOXN"/>
</dbReference>
<dbReference type="SMART" id="SM01360">
    <property type="entry name" value="A2M"/>
    <property type="match status" value="1"/>
</dbReference>
<dbReference type="SMART" id="SM01359">
    <property type="entry name" value="A2M_N_2"/>
    <property type="match status" value="1"/>
</dbReference>
<dbReference type="SMART" id="SM01361">
    <property type="entry name" value="A2M_recep"/>
    <property type="match status" value="1"/>
</dbReference>
<dbReference type="SMART" id="SM00104">
    <property type="entry name" value="ANATO"/>
    <property type="match status" value="1"/>
</dbReference>
<dbReference type="SMART" id="SM00643">
    <property type="entry name" value="C345C"/>
    <property type="match status" value="1"/>
</dbReference>
<dbReference type="SMART" id="SM01419">
    <property type="entry name" value="Thiol-ester_cl"/>
    <property type="match status" value="1"/>
</dbReference>
<dbReference type="SUPFAM" id="SSF49410">
    <property type="entry name" value="Alpha-macroglobulin receptor domain"/>
    <property type="match status" value="1"/>
</dbReference>
<dbReference type="SUPFAM" id="SSF47686">
    <property type="entry name" value="Anaphylotoxins (complement system)"/>
    <property type="match status" value="1"/>
</dbReference>
<dbReference type="SUPFAM" id="SSF48239">
    <property type="entry name" value="Terpenoid cyclases/Protein prenyltransferases"/>
    <property type="match status" value="1"/>
</dbReference>
<dbReference type="SUPFAM" id="SSF50242">
    <property type="entry name" value="TIMP-like"/>
    <property type="match status" value="1"/>
</dbReference>
<dbReference type="PROSITE" id="PS00477">
    <property type="entry name" value="ALPHA_2_MACROGLOBULIN"/>
    <property type="match status" value="1"/>
</dbReference>
<dbReference type="PROSITE" id="PS01177">
    <property type="entry name" value="ANAPHYLATOXIN_1"/>
    <property type="match status" value="1"/>
</dbReference>
<dbReference type="PROSITE" id="PS01178">
    <property type="entry name" value="ANAPHYLATOXIN_2"/>
    <property type="match status" value="1"/>
</dbReference>
<dbReference type="PROSITE" id="PS50189">
    <property type="entry name" value="NTR"/>
    <property type="match status" value="1"/>
</dbReference>
<proteinExistence type="evidence at transcript level"/>
<protein>
    <recommendedName>
        <fullName>Venom factor</fullName>
        <shortName>VF</shortName>
    </recommendedName>
    <alternativeName>
        <fullName>CVF-like</fullName>
    </alternativeName>
    <alternativeName>
        <fullName>Complement C3 homolog</fullName>
    </alternativeName>
    <component>
        <recommendedName>
            <fullName>VF alpha chain</fullName>
        </recommendedName>
    </component>
    <component>
        <recommendedName>
            <fullName>VF gamma chain</fullName>
        </recommendedName>
    </component>
    <component>
        <recommendedName>
            <fullName>VF beta chain</fullName>
        </recommendedName>
    </component>
</protein>
<comment type="function">
    <text evidence="1">Complement-activating protein in venom. It is a structural and functional analog of complement component C3b, the activated form of C3. It binds factor B (CFB), which is subsequently cleaved by factor D (CFD) to form the bimolecular complex VF/Bb. VF/Bb is a C3/C5 convertase that cleaves both complement components C3 and C5. Structurally, it resembles the C3b degradation product C3c, which is not able to form a C3/C5 convertase. Unlike C3b/Bb, VF/Bb is a stable complex and completely resistant to the actions of complement regulatory factors H (CFH) and I (CFI). Therefore, VF continuously activates complement resulting in the depletion of complement activity (By similarity).</text>
</comment>
<comment type="subunit">
    <text evidence="1">Heterotrimer of alpha, beta and gamma chains; disulfide-linked. Is active with factor B in the presence of factor D (By similarity).</text>
</comment>
<comment type="subcellular location">
    <subcellularLocation>
        <location evidence="1">Secreted</location>
    </subcellularLocation>
</comment>
<comment type="tissue specificity">
    <text>Expressed by the venom gland.</text>
</comment>
<comment type="PTM">
    <text evidence="1">First processed by the removal of 4 Arg residues by furin-type protease, forming two chains, alpha and gamma/beta precursor, linked by a disulfide bond. Probably, a cobrin-like protease cleaves the C3a-like domain and then the C3d-like domain, generating the mature venom factor (VF) (By similarity).</text>
</comment>
<comment type="similarity">
    <text evidence="4">Belongs to the venom complement C3 homolog family.</text>
</comment>